<reference key="1">
    <citation type="journal article" date="2008" name="J. Bacteriol.">
        <title>The complete genome sequence of Escherichia coli DH10B: insights into the biology of a laboratory workhorse.</title>
        <authorList>
            <person name="Durfee T."/>
            <person name="Nelson R."/>
            <person name="Baldwin S."/>
            <person name="Plunkett G. III"/>
            <person name="Burland V."/>
            <person name="Mau B."/>
            <person name="Petrosino J.F."/>
            <person name="Qin X."/>
            <person name="Muzny D.M."/>
            <person name="Ayele M."/>
            <person name="Gibbs R.A."/>
            <person name="Csorgo B."/>
            <person name="Posfai G."/>
            <person name="Weinstock G.M."/>
            <person name="Blattner F.R."/>
        </authorList>
    </citation>
    <scope>NUCLEOTIDE SEQUENCE [LARGE SCALE GENOMIC DNA]</scope>
    <source>
        <strain>K12 / DH10B</strain>
    </source>
</reference>
<keyword id="KW-0028">Amino-acid biosynthesis</keyword>
<keyword id="KW-0963">Cytoplasm</keyword>
<keyword id="KW-0368">Histidine biosynthesis</keyword>
<keyword id="KW-0413">Isomerase</keyword>
<name>HIS4_ECODH</name>
<accession>B1X6W1</accession>
<organism>
    <name type="scientific">Escherichia coli (strain K12 / DH10B)</name>
    <dbReference type="NCBI Taxonomy" id="316385"/>
    <lineage>
        <taxon>Bacteria</taxon>
        <taxon>Pseudomonadati</taxon>
        <taxon>Pseudomonadota</taxon>
        <taxon>Gammaproteobacteria</taxon>
        <taxon>Enterobacterales</taxon>
        <taxon>Enterobacteriaceae</taxon>
        <taxon>Escherichia</taxon>
    </lineage>
</organism>
<feature type="chain" id="PRO_1000135112" description="1-(5-phosphoribosyl)-5-[(5-phosphoribosylamino)methylideneamino] imidazole-4-carboxamide isomerase">
    <location>
        <begin position="1"/>
        <end position="245"/>
    </location>
</feature>
<feature type="active site" description="Proton acceptor" evidence="1">
    <location>
        <position position="7"/>
    </location>
</feature>
<feature type="active site" description="Proton donor" evidence="1">
    <location>
        <position position="129"/>
    </location>
</feature>
<gene>
    <name evidence="1" type="primary">hisA</name>
    <name type="ordered locus">ECDH10B_2172</name>
</gene>
<protein>
    <recommendedName>
        <fullName evidence="1">1-(5-phosphoribosyl)-5-[(5-phosphoribosylamino)methylideneamino] imidazole-4-carboxamide isomerase</fullName>
        <ecNumber evidence="1">5.3.1.16</ecNumber>
    </recommendedName>
    <alternativeName>
        <fullName evidence="1">Phosphoribosylformimino-5-aminoimidazole carboxamide ribotide isomerase</fullName>
    </alternativeName>
</protein>
<proteinExistence type="inferred from homology"/>
<sequence>MIIPALDLIDGTVVRLHQGDYGKQRDYGNDPLPRLQDYAAQGAEVLHLVDLTGAKDPAKRQIPLIKTLVAGVNVPVQVGGGVRSEEDVAALLEAGVARVVVGSTAVKSQDMVKGWFERFGADALVLALDVRIDEQGNKQVAVSGWQENSGVSLEQLVETYLPVGLKHVLCTDISRDGTLAGSNVSLYEEVCARYPQVAFQSSGGIGDIDDVAALRGTGVRGVIVGRALLEGKFTVKEAIACWQNA</sequence>
<comment type="catalytic activity">
    <reaction evidence="1">
        <text>1-(5-phospho-beta-D-ribosyl)-5-[(5-phospho-beta-D-ribosylamino)methylideneamino]imidazole-4-carboxamide = 5-[(5-phospho-1-deoxy-D-ribulos-1-ylimino)methylamino]-1-(5-phospho-beta-D-ribosyl)imidazole-4-carboxamide</text>
        <dbReference type="Rhea" id="RHEA:15469"/>
        <dbReference type="ChEBI" id="CHEBI:58435"/>
        <dbReference type="ChEBI" id="CHEBI:58525"/>
        <dbReference type="EC" id="5.3.1.16"/>
    </reaction>
</comment>
<comment type="pathway">
    <text evidence="1">Amino-acid biosynthesis; L-histidine biosynthesis; L-histidine from 5-phospho-alpha-D-ribose 1-diphosphate: step 4/9.</text>
</comment>
<comment type="subcellular location">
    <subcellularLocation>
        <location evidence="1">Cytoplasm</location>
    </subcellularLocation>
</comment>
<comment type="similarity">
    <text evidence="1">Belongs to the HisA/HisF family.</text>
</comment>
<evidence type="ECO:0000255" key="1">
    <source>
        <dbReference type="HAMAP-Rule" id="MF_01014"/>
    </source>
</evidence>
<dbReference type="EC" id="5.3.1.16" evidence="1"/>
<dbReference type="EMBL" id="CP000948">
    <property type="protein sequence ID" value="ACB03197.1"/>
    <property type="molecule type" value="Genomic_DNA"/>
</dbReference>
<dbReference type="RefSeq" id="WP_000586462.1">
    <property type="nucleotide sequence ID" value="NC_010473.1"/>
</dbReference>
<dbReference type="SMR" id="B1X6W1"/>
<dbReference type="KEGG" id="ecd:ECDH10B_2172"/>
<dbReference type="HOGENOM" id="CLU_048577_1_2_6"/>
<dbReference type="UniPathway" id="UPA00031">
    <property type="reaction ID" value="UER00009"/>
</dbReference>
<dbReference type="GO" id="GO:0005737">
    <property type="term" value="C:cytoplasm"/>
    <property type="evidence" value="ECO:0007669"/>
    <property type="project" value="UniProtKB-SubCell"/>
</dbReference>
<dbReference type="GO" id="GO:0003949">
    <property type="term" value="F:1-(5-phosphoribosyl)-5-[(5-phosphoribosylamino)methylideneamino]imidazole-4-carboxamide isomerase activity"/>
    <property type="evidence" value="ECO:0007669"/>
    <property type="project" value="UniProtKB-UniRule"/>
</dbReference>
<dbReference type="GO" id="GO:0000105">
    <property type="term" value="P:L-histidine biosynthetic process"/>
    <property type="evidence" value="ECO:0007669"/>
    <property type="project" value="UniProtKB-UniRule"/>
</dbReference>
<dbReference type="GO" id="GO:0000162">
    <property type="term" value="P:L-tryptophan biosynthetic process"/>
    <property type="evidence" value="ECO:0007669"/>
    <property type="project" value="TreeGrafter"/>
</dbReference>
<dbReference type="CDD" id="cd04732">
    <property type="entry name" value="HisA"/>
    <property type="match status" value="1"/>
</dbReference>
<dbReference type="FunFam" id="3.20.20.70:FF:000009">
    <property type="entry name" value="1-(5-phosphoribosyl)-5-[(5-phosphoribosylamino)methylideneamino] imidazole-4-carboxamide isomerase"/>
    <property type="match status" value="1"/>
</dbReference>
<dbReference type="Gene3D" id="3.20.20.70">
    <property type="entry name" value="Aldolase class I"/>
    <property type="match status" value="1"/>
</dbReference>
<dbReference type="HAMAP" id="MF_01014">
    <property type="entry name" value="HisA"/>
    <property type="match status" value="1"/>
</dbReference>
<dbReference type="InterPro" id="IPR013785">
    <property type="entry name" value="Aldolase_TIM"/>
</dbReference>
<dbReference type="InterPro" id="IPR006062">
    <property type="entry name" value="His_biosynth"/>
</dbReference>
<dbReference type="InterPro" id="IPR006063">
    <property type="entry name" value="HisA_bact_arch"/>
</dbReference>
<dbReference type="InterPro" id="IPR044524">
    <property type="entry name" value="Isoase_HisA-like"/>
</dbReference>
<dbReference type="InterPro" id="IPR023016">
    <property type="entry name" value="Isoase_HisA-like_bact"/>
</dbReference>
<dbReference type="InterPro" id="IPR011060">
    <property type="entry name" value="RibuloseP-bd_barrel"/>
</dbReference>
<dbReference type="NCBIfam" id="TIGR00007">
    <property type="entry name" value="1-(5-phosphoribosyl)-5-[(5-phosphoribosylamino)methylideneamino]imidazole-4-carboxamide isomerase"/>
    <property type="match status" value="1"/>
</dbReference>
<dbReference type="PANTHER" id="PTHR43090">
    <property type="entry name" value="1-(5-PHOSPHORIBOSYL)-5-[(5-PHOSPHORIBOSYLAMINO)METHYLIDENEAMINO] IMIDAZOLE-4-CARBOXAMIDE ISOMERASE"/>
    <property type="match status" value="1"/>
</dbReference>
<dbReference type="PANTHER" id="PTHR43090:SF2">
    <property type="entry name" value="1-(5-PHOSPHORIBOSYL)-5-[(5-PHOSPHORIBOSYLAMINO)METHYLIDENEAMINO] IMIDAZOLE-4-CARBOXAMIDE ISOMERASE"/>
    <property type="match status" value="1"/>
</dbReference>
<dbReference type="Pfam" id="PF00977">
    <property type="entry name" value="His_biosynth"/>
    <property type="match status" value="1"/>
</dbReference>
<dbReference type="SUPFAM" id="SSF51366">
    <property type="entry name" value="Ribulose-phoshate binding barrel"/>
    <property type="match status" value="1"/>
</dbReference>